<gene>
    <name evidence="1" type="primary">grpE</name>
</gene>
<comment type="function">
    <text evidence="1">Participates actively in the response to hyperosmotic and heat shock by preventing the aggregation of stress-denatured proteins, in association with DnaK and GrpE. It is the nucleotide exchange factor for DnaK and may function as a thermosensor. Unfolded proteins bind initially to DnaJ; upon interaction with the DnaJ-bound protein, DnaK hydrolyzes its bound ATP, resulting in the formation of a stable complex. GrpE releases ADP from DnaK; ATP binding to DnaK triggers the release of the substrate protein, thus completing the reaction cycle. Several rounds of ATP-dependent interactions between DnaJ, DnaK and GrpE are required for fully efficient folding.</text>
</comment>
<comment type="subunit">
    <text evidence="1">Homodimer.</text>
</comment>
<comment type="subcellular location">
    <subcellularLocation>
        <location evidence="1">Cytoplasm</location>
    </subcellularLocation>
</comment>
<comment type="similarity">
    <text evidence="1">Belongs to the GrpE family.</text>
</comment>
<proteinExistence type="inferred from homology"/>
<name>GRPE_LATSK</name>
<keyword id="KW-0143">Chaperone</keyword>
<keyword id="KW-0963">Cytoplasm</keyword>
<keyword id="KW-0346">Stress response</keyword>
<accession>O87776</accession>
<dbReference type="EMBL" id="AJ006274">
    <property type="protein sequence ID" value="CAA06940.1"/>
    <property type="molecule type" value="Genomic_DNA"/>
</dbReference>
<dbReference type="RefSeq" id="WP_016265326.1">
    <property type="nucleotide sequence ID" value="NZ_QOSE01000009.1"/>
</dbReference>
<dbReference type="SMR" id="O87776"/>
<dbReference type="GeneID" id="57132141"/>
<dbReference type="GO" id="GO:0005737">
    <property type="term" value="C:cytoplasm"/>
    <property type="evidence" value="ECO:0007669"/>
    <property type="project" value="UniProtKB-SubCell"/>
</dbReference>
<dbReference type="GO" id="GO:0000774">
    <property type="term" value="F:adenyl-nucleotide exchange factor activity"/>
    <property type="evidence" value="ECO:0007669"/>
    <property type="project" value="InterPro"/>
</dbReference>
<dbReference type="GO" id="GO:0042803">
    <property type="term" value="F:protein homodimerization activity"/>
    <property type="evidence" value="ECO:0007669"/>
    <property type="project" value="InterPro"/>
</dbReference>
<dbReference type="GO" id="GO:0051087">
    <property type="term" value="F:protein-folding chaperone binding"/>
    <property type="evidence" value="ECO:0007669"/>
    <property type="project" value="InterPro"/>
</dbReference>
<dbReference type="GO" id="GO:0051082">
    <property type="term" value="F:unfolded protein binding"/>
    <property type="evidence" value="ECO:0007669"/>
    <property type="project" value="TreeGrafter"/>
</dbReference>
<dbReference type="GO" id="GO:0006457">
    <property type="term" value="P:protein folding"/>
    <property type="evidence" value="ECO:0007669"/>
    <property type="project" value="InterPro"/>
</dbReference>
<dbReference type="CDD" id="cd00446">
    <property type="entry name" value="GrpE"/>
    <property type="match status" value="1"/>
</dbReference>
<dbReference type="FunFam" id="2.30.22.10:FF:000001">
    <property type="entry name" value="Protein GrpE"/>
    <property type="match status" value="1"/>
</dbReference>
<dbReference type="Gene3D" id="3.90.20.20">
    <property type="match status" value="1"/>
</dbReference>
<dbReference type="Gene3D" id="2.30.22.10">
    <property type="entry name" value="Head domain of nucleotide exchange factor GrpE"/>
    <property type="match status" value="1"/>
</dbReference>
<dbReference type="HAMAP" id="MF_01151">
    <property type="entry name" value="GrpE"/>
    <property type="match status" value="1"/>
</dbReference>
<dbReference type="InterPro" id="IPR000740">
    <property type="entry name" value="GrpE"/>
</dbReference>
<dbReference type="InterPro" id="IPR013805">
    <property type="entry name" value="GrpE_coiled_coil"/>
</dbReference>
<dbReference type="InterPro" id="IPR009012">
    <property type="entry name" value="GrpE_head"/>
</dbReference>
<dbReference type="NCBIfam" id="NF010738">
    <property type="entry name" value="PRK14140.1"/>
    <property type="match status" value="1"/>
</dbReference>
<dbReference type="NCBIfam" id="NF010759">
    <property type="entry name" value="PRK14162.1"/>
    <property type="match status" value="1"/>
</dbReference>
<dbReference type="PANTHER" id="PTHR21237">
    <property type="entry name" value="GRPE PROTEIN"/>
    <property type="match status" value="1"/>
</dbReference>
<dbReference type="PANTHER" id="PTHR21237:SF23">
    <property type="entry name" value="GRPE PROTEIN HOMOLOG, MITOCHONDRIAL"/>
    <property type="match status" value="1"/>
</dbReference>
<dbReference type="Pfam" id="PF01025">
    <property type="entry name" value="GrpE"/>
    <property type="match status" value="1"/>
</dbReference>
<dbReference type="PRINTS" id="PR00773">
    <property type="entry name" value="GRPEPROTEIN"/>
</dbReference>
<dbReference type="SUPFAM" id="SSF58014">
    <property type="entry name" value="Coiled-coil domain of nucleotide exchange factor GrpE"/>
    <property type="match status" value="1"/>
</dbReference>
<dbReference type="SUPFAM" id="SSF51064">
    <property type="entry name" value="Head domain of nucleotide exchange factor GrpE"/>
    <property type="match status" value="1"/>
</dbReference>
<dbReference type="PROSITE" id="PS01071">
    <property type="entry name" value="GRPE"/>
    <property type="match status" value="1"/>
</dbReference>
<reference key="1">
    <citation type="submission" date="1998-07" db="EMBL/GenBank/DDBJ databases">
        <title>Cloning and sequence analysis of the dnaK operon of Lactobacillus sakei LTH681.</title>
        <authorList>
            <person name="Schmidt G."/>
            <person name="Hertel C."/>
            <person name="Hammes W.P."/>
        </authorList>
    </citation>
    <scope>NUCLEOTIDE SEQUENCE [GENOMIC DNA]</scope>
    <source>
        <strain>LTH681</strain>
    </source>
</reference>
<protein>
    <recommendedName>
        <fullName evidence="1">Protein GrpE</fullName>
    </recommendedName>
    <alternativeName>
        <fullName evidence="1">HSP-70 cofactor</fullName>
    </alternativeName>
</protein>
<organism>
    <name type="scientific">Latilactobacillus sakei</name>
    <name type="common">Lactobacillus sakei</name>
    <dbReference type="NCBI Taxonomy" id="1599"/>
    <lineage>
        <taxon>Bacteria</taxon>
        <taxon>Bacillati</taxon>
        <taxon>Bacillota</taxon>
        <taxon>Bacilli</taxon>
        <taxon>Lactobacillales</taxon>
        <taxon>Lactobacillaceae</taxon>
        <taxon>Latilactobacillus</taxon>
    </lineage>
</organism>
<feature type="chain" id="PRO_0000113802" description="Protein GrpE">
    <location>
        <begin position="1"/>
        <end position="197"/>
    </location>
</feature>
<feature type="region of interest" description="Disordered" evidence="2">
    <location>
        <begin position="1"/>
        <end position="50"/>
    </location>
</feature>
<feature type="compositionally biased region" description="Basic and acidic residues" evidence="2">
    <location>
        <begin position="1"/>
        <end position="27"/>
    </location>
</feature>
<feature type="compositionally biased region" description="Acidic residues" evidence="2">
    <location>
        <begin position="32"/>
        <end position="41"/>
    </location>
</feature>
<sequence>MTKQEKAENQEKPTEETVEETPKKETPFEPVMEADEVEETTEAQAPVEEADDKLAELQKKYDAMEDSFLRSQAEIKNIQMRNQKEQANLLKYDGQSLAKDVLPVLDNLERALAAEATDESLKKGVQMTYDHMKHALEDHGVKEIEAQGQAFDPTIHQAVQTVAVDGDQKADTVVQVFQKGYYLKDRVLRPAMVVVAQ</sequence>
<evidence type="ECO:0000255" key="1">
    <source>
        <dbReference type="HAMAP-Rule" id="MF_01151"/>
    </source>
</evidence>
<evidence type="ECO:0000256" key="2">
    <source>
        <dbReference type="SAM" id="MobiDB-lite"/>
    </source>
</evidence>